<gene>
    <name type="primary">CLDND1</name>
    <name type="ORF">QnpA-16207</name>
</gene>
<keyword id="KW-0965">Cell junction</keyword>
<keyword id="KW-1003">Cell membrane</keyword>
<keyword id="KW-0325">Glycoprotein</keyword>
<keyword id="KW-0472">Membrane</keyword>
<keyword id="KW-1185">Reference proteome</keyword>
<keyword id="KW-0796">Tight junction</keyword>
<keyword id="KW-0812">Transmembrane</keyword>
<keyword id="KW-1133">Transmembrane helix</keyword>
<organism>
    <name type="scientific">Macaca fascicularis</name>
    <name type="common">Crab-eating macaque</name>
    <name type="synonym">Cynomolgus monkey</name>
    <dbReference type="NCBI Taxonomy" id="9541"/>
    <lineage>
        <taxon>Eukaryota</taxon>
        <taxon>Metazoa</taxon>
        <taxon>Chordata</taxon>
        <taxon>Craniata</taxon>
        <taxon>Vertebrata</taxon>
        <taxon>Euteleostomi</taxon>
        <taxon>Mammalia</taxon>
        <taxon>Eutheria</taxon>
        <taxon>Euarchontoglires</taxon>
        <taxon>Primates</taxon>
        <taxon>Haplorrhini</taxon>
        <taxon>Catarrhini</taxon>
        <taxon>Cercopithecidae</taxon>
        <taxon>Cercopithecinae</taxon>
        <taxon>Macaca</taxon>
    </lineage>
</organism>
<proteinExistence type="evidence at transcript level"/>
<dbReference type="EMBL" id="AB169751">
    <property type="protein sequence ID" value="BAE01832.1"/>
    <property type="molecule type" value="mRNA"/>
</dbReference>
<dbReference type="RefSeq" id="XP_005548395.2">
    <property type="nucleotide sequence ID" value="XM_005548338.4"/>
</dbReference>
<dbReference type="RefSeq" id="XP_005548396.2">
    <property type="nucleotide sequence ID" value="XM_005548339.4"/>
</dbReference>
<dbReference type="RefSeq" id="XP_005548398.1">
    <property type="nucleotide sequence ID" value="XM_005548341.4"/>
</dbReference>
<dbReference type="RefSeq" id="XP_005548399.1">
    <property type="nucleotide sequence ID" value="XM_005548342.2"/>
</dbReference>
<dbReference type="RefSeq" id="XP_005548400.1">
    <property type="nucleotide sequence ID" value="XM_005548343.2"/>
</dbReference>
<dbReference type="RefSeq" id="XP_005548401.1">
    <property type="nucleotide sequence ID" value="XM_005548344.2"/>
</dbReference>
<dbReference type="RefSeq" id="XP_015302044.1">
    <property type="nucleotide sequence ID" value="XM_015446558.3"/>
</dbReference>
<dbReference type="RefSeq" id="XP_015302045.1">
    <property type="nucleotide sequence ID" value="XM_015446559.3"/>
</dbReference>
<dbReference type="RefSeq" id="XP_015302046.1">
    <property type="nucleotide sequence ID" value="XM_015446560.1"/>
</dbReference>
<dbReference type="RefSeq" id="XP_015302047.1">
    <property type="nucleotide sequence ID" value="XM_015446561.1"/>
</dbReference>
<dbReference type="RefSeq" id="XP_015302048.1">
    <property type="nucleotide sequence ID" value="XM_015446562.1"/>
</dbReference>
<dbReference type="RefSeq" id="XP_065395347.1">
    <property type="nucleotide sequence ID" value="XM_065539275.1"/>
</dbReference>
<dbReference type="STRING" id="9541.ENSMFAP00000041732"/>
<dbReference type="GlyCosmos" id="Q4R4Z3">
    <property type="glycosylation" value="2 sites, No reported glycans"/>
</dbReference>
<dbReference type="Ensembl" id="ENSMFAT00000099914.1">
    <property type="protein sequence ID" value="ENSMFAP00000052770.1"/>
    <property type="gene ID" value="ENSMFAG00000041563.2"/>
</dbReference>
<dbReference type="GeneID" id="101925141"/>
<dbReference type="KEGG" id="mcf:101925141"/>
<dbReference type="CTD" id="56650"/>
<dbReference type="VEuPathDB" id="HostDB:ENSMFAG00000041563"/>
<dbReference type="eggNOG" id="ENOG502QRAV">
    <property type="taxonomic scope" value="Eukaryota"/>
</dbReference>
<dbReference type="GeneTree" id="ENSGT00390000002596"/>
<dbReference type="Proteomes" id="UP000233100">
    <property type="component" value="Chromosome 2"/>
</dbReference>
<dbReference type="Bgee" id="ENSMFAG00000041563">
    <property type="expression patterns" value="Expressed in frontal cortex and 13 other cell types or tissues"/>
</dbReference>
<dbReference type="GO" id="GO:0016020">
    <property type="term" value="C:membrane"/>
    <property type="evidence" value="ECO:0007669"/>
    <property type="project" value="UniProtKB-SubCell"/>
</dbReference>
<dbReference type="FunFam" id="1.20.140.150:FF:000009">
    <property type="entry name" value="Claudin domain-containing protein 1"/>
    <property type="match status" value="1"/>
</dbReference>
<dbReference type="Gene3D" id="1.20.140.150">
    <property type="match status" value="1"/>
</dbReference>
<dbReference type="InterPro" id="IPR042356">
    <property type="entry name" value="CLDN1"/>
</dbReference>
<dbReference type="InterPro" id="IPR004031">
    <property type="entry name" value="PMP22/EMP/MP20/Claudin"/>
</dbReference>
<dbReference type="PANTHER" id="PTHR14347">
    <property type="entry name" value="CLAUDIN DOMAIN-CONTAINING PROTEIN 1"/>
    <property type="match status" value="1"/>
</dbReference>
<dbReference type="PANTHER" id="PTHR14347:SF3">
    <property type="entry name" value="CLAUDIN DOMAIN-CONTAINING PROTEIN 1"/>
    <property type="match status" value="1"/>
</dbReference>
<dbReference type="Pfam" id="PF13903">
    <property type="entry name" value="Claudin_2"/>
    <property type="match status" value="1"/>
</dbReference>
<name>CLDN1_MACFA</name>
<evidence type="ECO:0000250" key="1">
    <source>
        <dbReference type="UniProtKB" id="Q9NY35"/>
    </source>
</evidence>
<evidence type="ECO:0000255" key="2"/>
<evidence type="ECO:0000305" key="3"/>
<reference key="1">
    <citation type="submission" date="2005-06" db="EMBL/GenBank/DDBJ databases">
        <title>DNA sequences of macaque genes expressed in brain or testis and its evolutionary implications.</title>
        <authorList>
            <consortium name="International consortium for macaque cDNA sequencing and analysis"/>
        </authorList>
    </citation>
    <scope>NUCLEOTIDE SEQUENCE [LARGE SCALE MRNA]</scope>
    <source>
        <tissue>Parietal cortex</tissue>
    </source>
</reference>
<feature type="chain" id="PRO_0000273423" description="Claudin domain-containing protein 1">
    <location>
        <begin position="1"/>
        <end position="253"/>
    </location>
</feature>
<feature type="transmembrane region" description="Helical" evidence="2">
    <location>
        <begin position="5"/>
        <end position="25"/>
    </location>
</feature>
<feature type="transmembrane region" description="Helical" evidence="2">
    <location>
        <begin position="141"/>
        <end position="161"/>
    </location>
</feature>
<feature type="transmembrane region" description="Helical" evidence="2">
    <location>
        <begin position="175"/>
        <end position="195"/>
    </location>
</feature>
<feature type="transmembrane region" description="Helical" evidence="2">
    <location>
        <begin position="216"/>
        <end position="236"/>
    </location>
</feature>
<feature type="glycosylation site" description="N-linked (GlcNAc...) asparagine" evidence="2">
    <location>
        <position position="42"/>
    </location>
</feature>
<feature type="glycosylation site" description="N-linked (GlcNAc...) asparagine" evidence="2">
    <location>
        <position position="72"/>
    </location>
</feature>
<protein>
    <recommendedName>
        <fullName>Claudin domain-containing protein 1</fullName>
    </recommendedName>
    <alternativeName>
        <fullName evidence="1">Claudin-25</fullName>
    </alternativeName>
</protein>
<accession>Q4R4Z3</accession>
<sequence>MDNRFATAFVIACVLSLISTIYMAASIGTDFWYEYRSPVQENSSDLNKSIWDEFISDEADEKTYNDALFRYNGTVGLWRRCITIPKNMHWYSPPERTESFDVVTKCVSFTLTEQFMEKFVDPGNHNSGIDLLRTYLWRCQFLLPFVSLGLMCFGALIGLCACICRSLYPTIATGILHLLAGLCTLGSVSCYVAGIELLHQKLELPDSVSGEFGWSFCLACVSAPLQFMASALFIWAAHTNRKEYTLMKAYRVA</sequence>
<comment type="function">
    <text evidence="1">Plays a role in negatively regulating the permeability of cells to small molecules.</text>
</comment>
<comment type="subcellular location">
    <subcellularLocation>
        <location evidence="1">Cell junction</location>
        <location evidence="1">Tight junction</location>
    </subcellularLocation>
    <subcellularLocation>
        <location evidence="3">Cell membrane</location>
        <topology evidence="2">Multi-pass membrane protein</topology>
    </subcellularLocation>
</comment>
<comment type="domain">
    <text evidence="1">The C-terminal region is required for localization to tight junctions which occurs in a TJP1/ZO1-independent manner.</text>
</comment>
<comment type="similarity">
    <text evidence="3">Belongs to the PMP-22/EMP/MP20 family.</text>
</comment>